<sequence>MMKTEPRGPGGPLRSASPHRSAYEAGIQALKPPDAPGPDEAPKAAHHKKYGSNVHRIKSMFLQMGTTAGPPGEAGGGAGMAEAPRASDRGVRLSLPRASSLNENVDHSALLKLGTSVSERVSRFDSKPAPSAQPAPPPHPPSRLQETRKLFERSVPAASGGDKEAVARRLLRQERAGLQDRKLDVVVRFNGSTEALDKLDADAVSPTVSQLSAVFEKADSRTGLHRAPGPPRAAGAPQVNSKLVTKRSRVFQPPPPPPAPSGDGATEKERGPGGQQPPQHRVAPARPPPKPREVRKIKPVEVEESGESEAESAPGEVIQAEVTVHAALENGSTPATTASPAPEEPKAEAVPEEEAAASVATLERGVDNGRAPDMAPEEVDESKKEDFSEADLVDVSAYSGLGEDSGGSALEEDDEEDEEDGEPPYEPESGCVEIPGLSEEEDPAPSRKIHFSTAPIQVFSTYSNEDYDRRNEDVDPMAASAEYELEKRVERLELFPVELEKDSEGLGISIIGMGAGADMGLEKLGIFVKTVTEGGAAHRDGRIQVNDLLVEVDGTSLVGVTQSFAASVLRNTKGRVRFMIGRERPGEQSEVAQLIQQTLEQERWQREMMEQRYAQYGEDDEETGEYATDEDEELSPTFPGGEMAIEVFELAENEDALSPVEMEPEKLVHKFKELQIKHAVTEAEIQQLKRKLQSLEQEKGRWRVEKAQLEQSVEENKERMEKLEGYWGEAQSLCQAVDEHLRETQAQYQALERKYSKAKRLIKDYQQKEIEFLKKETAQRRVLEESELARKEEMDKLLDKISELEGNLQTLRNSNST</sequence>
<accession>Q6R891</accession>
<accession>Q8K0X7</accession>
<gene>
    <name type="primary">Ppp1r9b</name>
</gene>
<protein>
    <recommendedName>
        <fullName>Neurabin-2</fullName>
    </recommendedName>
    <alternativeName>
        <fullName>Neurabin-II</fullName>
    </alternativeName>
    <alternativeName>
        <fullName>Protein phosphatase 1 regulatory subunit 9B</fullName>
    </alternativeName>
    <alternativeName>
        <fullName>Spinophilin</fullName>
    </alternativeName>
</protein>
<evidence type="ECO:0000250" key="1"/>
<evidence type="ECO:0000250" key="2">
    <source>
        <dbReference type="UniProtKB" id="O35274"/>
    </source>
</evidence>
<evidence type="ECO:0000250" key="3">
    <source>
        <dbReference type="UniProtKB" id="Q96SB3"/>
    </source>
</evidence>
<evidence type="ECO:0000255" key="4"/>
<evidence type="ECO:0000255" key="5">
    <source>
        <dbReference type="PROSITE-ProRule" id="PRU00143"/>
    </source>
</evidence>
<evidence type="ECO:0000256" key="6">
    <source>
        <dbReference type="SAM" id="MobiDB-lite"/>
    </source>
</evidence>
<evidence type="ECO:0000269" key="7">
    <source>
    </source>
</evidence>
<evidence type="ECO:0000269" key="8">
    <source>
    </source>
</evidence>
<evidence type="ECO:0000269" key="9">
    <source>
    </source>
</evidence>
<evidence type="ECO:0000303" key="10">
    <source>
    </source>
</evidence>
<feature type="chain" id="PRO_0000228615" description="Neurabin-2">
    <location>
        <begin position="1"/>
        <end position="817"/>
    </location>
</feature>
<feature type="domain" description="PDZ" evidence="5">
    <location>
        <begin position="496"/>
        <end position="584"/>
    </location>
</feature>
<feature type="region of interest" description="Actin-binding" evidence="1">
    <location>
        <begin position="1"/>
        <end position="154"/>
    </location>
</feature>
<feature type="region of interest" description="Disordered" evidence="6">
    <location>
        <begin position="1"/>
        <end position="52"/>
    </location>
</feature>
<feature type="region of interest" description="Disordered" evidence="6">
    <location>
        <begin position="64"/>
        <end position="163"/>
    </location>
</feature>
<feature type="region of interest" description="Interaction with D(2) dopamine receptor" evidence="1">
    <location>
        <begin position="100"/>
        <end position="371"/>
    </location>
</feature>
<feature type="region of interest" description="Actin-binding" evidence="1">
    <location>
        <begin position="164"/>
        <end position="282"/>
    </location>
</feature>
<feature type="region of interest" description="Interaction with ADRA2A, ADRA2B and ADRA2C" evidence="1">
    <location>
        <begin position="169"/>
        <end position="255"/>
    </location>
</feature>
<feature type="region of interest" description="Disordered" evidence="6">
    <location>
        <begin position="216"/>
        <end position="451"/>
    </location>
</feature>
<feature type="region of interest" description="Interaction with protein phosphatase 1" evidence="1">
    <location>
        <begin position="417"/>
        <end position="494"/>
    </location>
</feature>
<feature type="region of interest" description="Interaction with RGS2" evidence="1">
    <location>
        <begin position="480"/>
        <end position="525"/>
    </location>
</feature>
<feature type="region of interest" description="Interaction with TGN38" evidence="1">
    <location>
        <begin position="595"/>
        <end position="816"/>
    </location>
</feature>
<feature type="coiled-coil region" evidence="4">
    <location>
        <begin position="595"/>
        <end position="616"/>
    </location>
</feature>
<feature type="coiled-coil region" evidence="4">
    <location>
        <begin position="665"/>
        <end position="816"/>
    </location>
</feature>
<feature type="short sequence motif" description="PP1-binding motif" evidence="2">
    <location>
        <begin position="447"/>
        <end position="451"/>
    </location>
</feature>
<feature type="compositionally biased region" description="Pro residues" evidence="6">
    <location>
        <begin position="131"/>
        <end position="141"/>
    </location>
</feature>
<feature type="compositionally biased region" description="Basic and acidic residues" evidence="6">
    <location>
        <begin position="290"/>
        <end position="301"/>
    </location>
</feature>
<feature type="compositionally biased region" description="Low complexity" evidence="6">
    <location>
        <begin position="332"/>
        <end position="341"/>
    </location>
</feature>
<feature type="compositionally biased region" description="Low complexity" evidence="6">
    <location>
        <begin position="399"/>
        <end position="409"/>
    </location>
</feature>
<feature type="compositionally biased region" description="Acidic residues" evidence="6">
    <location>
        <begin position="410"/>
        <end position="425"/>
    </location>
</feature>
<feature type="modified residue" description="Phosphoserine; by MAPK1" evidence="7">
    <location>
        <position position="15"/>
    </location>
</feature>
<feature type="modified residue" description="Phosphoserine; by CDK5" evidence="7">
    <location>
        <position position="17"/>
    </location>
</feature>
<feature type="modified residue" description="Phosphoserine; by PKA" evidence="8">
    <location>
        <position position="94"/>
    </location>
</feature>
<feature type="modified residue" description="Phosphoserine" evidence="2">
    <location>
        <position position="100"/>
    </location>
</feature>
<feature type="modified residue" description="Phosphoserine" evidence="2">
    <location>
        <position position="116"/>
    </location>
</feature>
<feature type="modified residue" description="Phosphoserine" evidence="3">
    <location>
        <position position="192"/>
    </location>
</feature>
<feature type="modified residue" description="Phosphothreonine" evidence="3">
    <location>
        <position position="193"/>
    </location>
</feature>
<feature type="modified residue" description="Phosphoserine; by MAPK1" evidence="7">
    <location>
        <position position="205"/>
    </location>
</feature>
<feature type="modified residue" description="Phosphothreonine" evidence="3">
    <location>
        <position position="207"/>
    </location>
</feature>
<feature type="modified residue" description="Phosphoserine" evidence="3">
    <location>
        <position position="438"/>
    </location>
</feature>
<feature type="modified residue" description="Phosphoserine" evidence="3">
    <location>
        <position position="658"/>
    </location>
</feature>
<feature type="splice variant" id="VSP_017674" description="In isoform 2." evidence="10">
    <location>
        <begin position="1"/>
        <end position="424"/>
    </location>
</feature>
<feature type="splice variant" id="VSP_017675" description="In isoform 2." evidence="10">
    <original>YEPESGCVEIPGLSEEEDPAPSRKIHFSTAPI</original>
    <variation>MDTGLHATQLAQGPSPANVLLPSYGPLRTAPP</variation>
    <location>
        <begin position="425"/>
        <end position="456"/>
    </location>
</feature>
<feature type="mutagenesis site" description="Increases filopodial density." evidence="7">
    <original>S</original>
    <variation>E</variation>
    <location>
        <position position="15"/>
    </location>
</feature>
<name>NEB2_MOUSE</name>
<proteinExistence type="evidence at protein level"/>
<reference key="1">
    <citation type="submission" date="2003-12" db="EMBL/GenBank/DDBJ databases">
        <title>Mouse spinophilin cDNA.</title>
        <authorList>
            <person name="Allen P.B."/>
        </authorList>
    </citation>
    <scope>NUCLEOTIDE SEQUENCE [MRNA] (ISOFORM 1)</scope>
    <source>
        <strain>C57BL/6J</strain>
    </source>
</reference>
<reference key="2">
    <citation type="journal article" date="2009" name="PLoS Biol.">
        <title>Lineage-specific biology revealed by a finished genome assembly of the mouse.</title>
        <authorList>
            <person name="Church D.M."/>
            <person name="Goodstadt L."/>
            <person name="Hillier L.W."/>
            <person name="Zody M.C."/>
            <person name="Goldstein S."/>
            <person name="She X."/>
            <person name="Bult C.J."/>
            <person name="Agarwala R."/>
            <person name="Cherry J.L."/>
            <person name="DiCuccio M."/>
            <person name="Hlavina W."/>
            <person name="Kapustin Y."/>
            <person name="Meric P."/>
            <person name="Maglott D."/>
            <person name="Birtle Z."/>
            <person name="Marques A.C."/>
            <person name="Graves T."/>
            <person name="Zhou S."/>
            <person name="Teague B."/>
            <person name="Potamousis K."/>
            <person name="Churas C."/>
            <person name="Place M."/>
            <person name="Herschleb J."/>
            <person name="Runnheim R."/>
            <person name="Forrest D."/>
            <person name="Amos-Landgraf J."/>
            <person name="Schwartz D.C."/>
            <person name="Cheng Z."/>
            <person name="Lindblad-Toh K."/>
            <person name="Eichler E.E."/>
            <person name="Ponting C.P."/>
        </authorList>
    </citation>
    <scope>NUCLEOTIDE SEQUENCE [LARGE SCALE GENOMIC DNA]</scope>
    <source>
        <strain>C57BL/6J</strain>
    </source>
</reference>
<reference key="3">
    <citation type="journal article" date="2004" name="Genome Res.">
        <title>The status, quality, and expansion of the NIH full-length cDNA project: the Mammalian Gene Collection (MGC).</title>
        <authorList>
            <consortium name="The MGC Project Team"/>
        </authorList>
    </citation>
    <scope>NUCLEOTIDE SEQUENCE [LARGE SCALE MRNA] (ISOFORM 2)</scope>
    <source>
        <tissue>Eye</tissue>
    </source>
</reference>
<reference key="4">
    <citation type="journal article" date="2005" name="J. Neurochem.">
        <title>Regulation of spinophilin Ser94 phosphorylation in neostriatal neurons involves both DARPP-32-dependent and independent pathways.</title>
        <authorList>
            <person name="Uematsu K."/>
            <person name="Futter M."/>
            <person name="Hsieh-Wilson L.C."/>
            <person name="Higashi H."/>
            <person name="Maeda H."/>
            <person name="Nairn A.C."/>
            <person name="Greengard P."/>
            <person name="Nishi A."/>
        </authorList>
    </citation>
    <scope>PHOSPHORYLATION BY PKA</scope>
    <scope>PHOSPHORYLATION AT SER-94</scope>
    <scope>DEPHOSPHORYLATION BY PP1 AND PP2A</scope>
</reference>
<reference key="5">
    <citation type="journal article" date="2005" name="Proc. Natl. Acad. Sci. U.S.A.">
        <title>Phosphorylation of spinophilin by ERK and cyclin-dependent PK 5 (Cdk5).</title>
        <authorList>
            <person name="Futter M."/>
            <person name="Uematsu K."/>
            <person name="Bullock S.A."/>
            <person name="Kim Y."/>
            <person name="Hemmings H.C. Jr."/>
            <person name="Nishi A."/>
            <person name="Greengard P."/>
            <person name="Nairn A.C."/>
        </authorList>
    </citation>
    <scope>PHOSPHORYLATION BY MAPK1 AND CDK5</scope>
    <scope>PHOSPHORYLATION AT SER-15; SER-17 AND SER-205</scope>
    <scope>MUTAGENESIS OF SER-15</scope>
</reference>
<reference key="6">
    <citation type="journal article" date="2006" name="Cell Cycle">
        <title>Common and divergent roles for members of the mouse DCX superfamily.</title>
        <authorList>
            <person name="Coquelle F.M."/>
            <person name="Levy T."/>
            <person name="Bergmann S."/>
            <person name="Wolf S.G."/>
            <person name="Bar-El D."/>
            <person name="Sapir T."/>
            <person name="Brody Y."/>
            <person name="Orr I."/>
            <person name="Barkai N."/>
            <person name="Eichele G."/>
            <person name="Reiner O."/>
        </authorList>
    </citation>
    <scope>INTERACTION WITH DCLK2</scope>
</reference>
<reference key="7">
    <citation type="journal article" date="2009" name="Immunity">
        <title>The phagosomal proteome in interferon-gamma-activated macrophages.</title>
        <authorList>
            <person name="Trost M."/>
            <person name="English L."/>
            <person name="Lemieux S."/>
            <person name="Courcelles M."/>
            <person name="Desjardins M."/>
            <person name="Thibault P."/>
        </authorList>
    </citation>
    <scope>IDENTIFICATION BY MASS SPECTROMETRY [LARGE SCALE ANALYSIS]</scope>
</reference>
<reference key="8">
    <citation type="journal article" date="2010" name="Cell">
        <title>A tissue-specific atlas of mouse protein phosphorylation and expression.</title>
        <authorList>
            <person name="Huttlin E.L."/>
            <person name="Jedrychowski M.P."/>
            <person name="Elias J.E."/>
            <person name="Goswami T."/>
            <person name="Rad R."/>
            <person name="Beausoleil S.A."/>
            <person name="Villen J."/>
            <person name="Haas W."/>
            <person name="Sowa M.E."/>
            <person name="Gygi S.P."/>
        </authorList>
    </citation>
    <scope>IDENTIFICATION BY MASS SPECTROMETRY [LARGE SCALE ANALYSIS]</scope>
    <source>
        <tissue>Brain</tissue>
        <tissue>Brown adipose tissue</tissue>
        <tissue>Kidney</tissue>
        <tissue>Lung</tissue>
        <tissue>Pancreas</tissue>
        <tissue>Spleen</tissue>
    </source>
</reference>
<organism>
    <name type="scientific">Mus musculus</name>
    <name type="common">Mouse</name>
    <dbReference type="NCBI Taxonomy" id="10090"/>
    <lineage>
        <taxon>Eukaryota</taxon>
        <taxon>Metazoa</taxon>
        <taxon>Chordata</taxon>
        <taxon>Craniata</taxon>
        <taxon>Vertebrata</taxon>
        <taxon>Euteleostomi</taxon>
        <taxon>Mammalia</taxon>
        <taxon>Eutheria</taxon>
        <taxon>Euarchontoglires</taxon>
        <taxon>Glires</taxon>
        <taxon>Rodentia</taxon>
        <taxon>Myomorpha</taxon>
        <taxon>Muroidea</taxon>
        <taxon>Muridae</taxon>
        <taxon>Murinae</taxon>
        <taxon>Mus</taxon>
        <taxon>Mus</taxon>
    </lineage>
</organism>
<dbReference type="EMBL" id="AY508450">
    <property type="protein sequence ID" value="AAR91608.1"/>
    <property type="molecule type" value="mRNA"/>
</dbReference>
<dbReference type="EMBL" id="AL606480">
    <property type="status" value="NOT_ANNOTATED_CDS"/>
    <property type="molecule type" value="Genomic_DNA"/>
</dbReference>
<dbReference type="EMBL" id="BC029672">
    <property type="protein sequence ID" value="AAH29672.1"/>
    <property type="molecule type" value="mRNA"/>
</dbReference>
<dbReference type="CCDS" id="CCDS25268.1">
    <molecule id="Q6R891-1"/>
</dbReference>
<dbReference type="RefSeq" id="NP_758465.2">
    <molecule id="Q6R891-1"/>
    <property type="nucleotide sequence ID" value="NM_172261.3"/>
</dbReference>
<dbReference type="BMRB" id="Q6R891"/>
<dbReference type="SMR" id="Q6R891"/>
<dbReference type="BioGRID" id="229847">
    <property type="interactions" value="498"/>
</dbReference>
<dbReference type="FunCoup" id="Q6R891">
    <property type="interactions" value="1309"/>
</dbReference>
<dbReference type="IntAct" id="Q6R891">
    <property type="interactions" value="17"/>
</dbReference>
<dbReference type="MINT" id="Q6R891"/>
<dbReference type="STRING" id="10090.ENSMUSP00000041732"/>
<dbReference type="GlyGen" id="Q6R891">
    <property type="glycosylation" value="3 sites, 1 N-linked glycan (1 site), 1 O-linked glycan (1 site)"/>
</dbReference>
<dbReference type="iPTMnet" id="Q6R891"/>
<dbReference type="PhosphoSitePlus" id="Q6R891"/>
<dbReference type="SwissPalm" id="Q6R891"/>
<dbReference type="jPOST" id="Q6R891"/>
<dbReference type="PaxDb" id="10090-ENSMUSP00000041732"/>
<dbReference type="PeptideAtlas" id="Q6R891"/>
<dbReference type="ProteomicsDB" id="252873">
    <molecule id="Q6R891-1"/>
</dbReference>
<dbReference type="ProteomicsDB" id="252874">
    <molecule id="Q6R891-2"/>
</dbReference>
<dbReference type="Pumba" id="Q6R891"/>
<dbReference type="Antibodypedia" id="30484">
    <property type="antibodies" value="155 antibodies from 28 providers"/>
</dbReference>
<dbReference type="DNASU" id="217124"/>
<dbReference type="Ensembl" id="ENSMUST00000038696.12">
    <molecule id="Q6R891-1"/>
    <property type="protein sequence ID" value="ENSMUSP00000041732.6"/>
    <property type="gene ID" value="ENSMUSG00000038976.13"/>
</dbReference>
<dbReference type="Ensembl" id="ENSMUST00000107748.2">
    <molecule id="Q6R891-2"/>
    <property type="protein sequence ID" value="ENSMUSP00000103377.2"/>
    <property type="gene ID" value="ENSMUSG00000038976.13"/>
</dbReference>
<dbReference type="GeneID" id="217124"/>
<dbReference type="KEGG" id="mmu:217124"/>
<dbReference type="UCSC" id="uc007kzr.2">
    <molecule id="Q6R891-1"/>
    <property type="organism name" value="mouse"/>
</dbReference>
<dbReference type="UCSC" id="uc007kzs.2">
    <molecule id="Q6R891-2"/>
    <property type="organism name" value="mouse"/>
</dbReference>
<dbReference type="AGR" id="MGI:2387581"/>
<dbReference type="CTD" id="84687"/>
<dbReference type="MGI" id="MGI:2387581">
    <property type="gene designation" value="Ppp1r9b"/>
</dbReference>
<dbReference type="VEuPathDB" id="HostDB:ENSMUSG00000038976"/>
<dbReference type="eggNOG" id="KOG1945">
    <property type="taxonomic scope" value="Eukaryota"/>
</dbReference>
<dbReference type="GeneTree" id="ENSGT00940000158833"/>
<dbReference type="HOGENOM" id="CLU_007401_1_0_1"/>
<dbReference type="InParanoid" id="Q6R891"/>
<dbReference type="OMA" id="KVPHHKK"/>
<dbReference type="OrthoDB" id="62701at2759"/>
<dbReference type="PhylomeDB" id="Q6R891"/>
<dbReference type="TreeFam" id="TF105540"/>
<dbReference type="BioGRID-ORCS" id="217124">
    <property type="hits" value="4 hits in 78 CRISPR screens"/>
</dbReference>
<dbReference type="CD-CODE" id="CE726F99">
    <property type="entry name" value="Postsynaptic density"/>
</dbReference>
<dbReference type="ChiTaRS" id="Ppp1r9b">
    <property type="organism name" value="mouse"/>
</dbReference>
<dbReference type="PRO" id="PR:Q6R891"/>
<dbReference type="Proteomes" id="UP000000589">
    <property type="component" value="Chromosome 11"/>
</dbReference>
<dbReference type="RNAct" id="Q6R891">
    <property type="molecule type" value="protein"/>
</dbReference>
<dbReference type="Bgee" id="ENSMUSG00000038976">
    <property type="expression patterns" value="Expressed in dentate gyrus of hippocampal formation granule cell and 87 other cell types or tissues"/>
</dbReference>
<dbReference type="GO" id="GO:0005912">
    <property type="term" value="C:adherens junction"/>
    <property type="evidence" value="ECO:0007669"/>
    <property type="project" value="UniProtKB-SubCell"/>
</dbReference>
<dbReference type="GO" id="GO:0030864">
    <property type="term" value="C:cortical actin cytoskeleton"/>
    <property type="evidence" value="ECO:0000314"/>
    <property type="project" value="MGI"/>
</dbReference>
<dbReference type="GO" id="GO:0005737">
    <property type="term" value="C:cytoplasm"/>
    <property type="evidence" value="ECO:0000250"/>
    <property type="project" value="UniProtKB"/>
</dbReference>
<dbReference type="GO" id="GO:1990780">
    <property type="term" value="C:cytoplasmic side of dendritic spine plasma membrane"/>
    <property type="evidence" value="ECO:0007669"/>
    <property type="project" value="Ensembl"/>
</dbReference>
<dbReference type="GO" id="GO:0044327">
    <property type="term" value="C:dendritic spine head"/>
    <property type="evidence" value="ECO:0007669"/>
    <property type="project" value="Ensembl"/>
</dbReference>
<dbReference type="GO" id="GO:0044326">
    <property type="term" value="C:dendritic spine neck"/>
    <property type="evidence" value="ECO:0007669"/>
    <property type="project" value="Ensembl"/>
</dbReference>
<dbReference type="GO" id="GO:0098890">
    <property type="term" value="C:extrinsic component of postsynaptic membrane"/>
    <property type="evidence" value="ECO:0007669"/>
    <property type="project" value="Ensembl"/>
</dbReference>
<dbReference type="GO" id="GO:0030175">
    <property type="term" value="C:filopodium"/>
    <property type="evidence" value="ECO:0000314"/>
    <property type="project" value="MGI"/>
</dbReference>
<dbReference type="GO" id="GO:0098978">
    <property type="term" value="C:glutamatergic synapse"/>
    <property type="evidence" value="ECO:0007669"/>
    <property type="project" value="Ensembl"/>
</dbReference>
<dbReference type="GO" id="GO:0030426">
    <property type="term" value="C:growth cone"/>
    <property type="evidence" value="ECO:0007669"/>
    <property type="project" value="Ensembl"/>
</dbReference>
<dbReference type="GO" id="GO:0030027">
    <property type="term" value="C:lamellipodium"/>
    <property type="evidence" value="ECO:0000250"/>
    <property type="project" value="UniProtKB"/>
</dbReference>
<dbReference type="GO" id="GO:0043025">
    <property type="term" value="C:neuronal cell body"/>
    <property type="evidence" value="ECO:0007669"/>
    <property type="project" value="Ensembl"/>
</dbReference>
<dbReference type="GO" id="GO:0005654">
    <property type="term" value="C:nucleoplasm"/>
    <property type="evidence" value="ECO:0007669"/>
    <property type="project" value="Ensembl"/>
</dbReference>
<dbReference type="GO" id="GO:0005886">
    <property type="term" value="C:plasma membrane"/>
    <property type="evidence" value="ECO:0000250"/>
    <property type="project" value="UniProtKB"/>
</dbReference>
<dbReference type="GO" id="GO:0014069">
    <property type="term" value="C:postsynaptic density"/>
    <property type="evidence" value="ECO:0007669"/>
    <property type="project" value="UniProtKB-SubCell"/>
</dbReference>
<dbReference type="GO" id="GO:0032587">
    <property type="term" value="C:ruffle membrane"/>
    <property type="evidence" value="ECO:0000250"/>
    <property type="project" value="UniProtKB"/>
</dbReference>
<dbReference type="GO" id="GO:0097444">
    <property type="term" value="C:spine apparatus"/>
    <property type="evidence" value="ECO:0007669"/>
    <property type="project" value="Ensembl"/>
</dbReference>
<dbReference type="GO" id="GO:0003779">
    <property type="term" value="F:actin binding"/>
    <property type="evidence" value="ECO:0000304"/>
    <property type="project" value="MGI"/>
</dbReference>
<dbReference type="GO" id="GO:0051015">
    <property type="term" value="F:actin filament binding"/>
    <property type="evidence" value="ECO:0007669"/>
    <property type="project" value="Ensembl"/>
</dbReference>
<dbReference type="GO" id="GO:0031749">
    <property type="term" value="F:D2 dopamine receptor binding"/>
    <property type="evidence" value="ECO:0007669"/>
    <property type="project" value="Ensembl"/>
</dbReference>
<dbReference type="GO" id="GO:0019900">
    <property type="term" value="F:kinase binding"/>
    <property type="evidence" value="ECO:0007669"/>
    <property type="project" value="Ensembl"/>
</dbReference>
<dbReference type="GO" id="GO:0004672">
    <property type="term" value="F:protein kinase activity"/>
    <property type="evidence" value="ECO:0007669"/>
    <property type="project" value="Ensembl"/>
</dbReference>
<dbReference type="GO" id="GO:0008157">
    <property type="term" value="F:protein phosphatase 1 binding"/>
    <property type="evidence" value="ECO:0007669"/>
    <property type="project" value="Ensembl"/>
</dbReference>
<dbReference type="GO" id="GO:0004864">
    <property type="term" value="F:protein phosphatase inhibitor activity"/>
    <property type="evidence" value="ECO:0007669"/>
    <property type="project" value="Ensembl"/>
</dbReference>
<dbReference type="GO" id="GO:0044325">
    <property type="term" value="F:transmembrane transporter binding"/>
    <property type="evidence" value="ECO:0007669"/>
    <property type="project" value="Ensembl"/>
</dbReference>
<dbReference type="GO" id="GO:0030036">
    <property type="term" value="P:actin cytoskeleton organization"/>
    <property type="evidence" value="ECO:0000304"/>
    <property type="project" value="MGI"/>
</dbReference>
<dbReference type="GO" id="GO:0030042">
    <property type="term" value="P:actin filament depolymerization"/>
    <property type="evidence" value="ECO:0007669"/>
    <property type="project" value="Ensembl"/>
</dbReference>
<dbReference type="GO" id="GO:0007015">
    <property type="term" value="P:actin filament organization"/>
    <property type="evidence" value="ECO:0000353"/>
    <property type="project" value="MGI"/>
</dbReference>
<dbReference type="GO" id="GO:0019722">
    <property type="term" value="P:calcium-mediated signaling"/>
    <property type="evidence" value="ECO:0000315"/>
    <property type="project" value="MGI"/>
</dbReference>
<dbReference type="GO" id="GO:0016477">
    <property type="term" value="P:cell migration"/>
    <property type="evidence" value="ECO:0000250"/>
    <property type="project" value="UniProtKB"/>
</dbReference>
<dbReference type="GO" id="GO:0071364">
    <property type="term" value="P:cellular response to epidermal growth factor stimulus"/>
    <property type="evidence" value="ECO:0007669"/>
    <property type="project" value="Ensembl"/>
</dbReference>
<dbReference type="GO" id="GO:0071392">
    <property type="term" value="P:cellular response to estradiol stimulus"/>
    <property type="evidence" value="ECO:0007669"/>
    <property type="project" value="Ensembl"/>
</dbReference>
<dbReference type="GO" id="GO:0071315">
    <property type="term" value="P:cellular response to morphine"/>
    <property type="evidence" value="ECO:0000315"/>
    <property type="project" value="UniProtKB"/>
</dbReference>
<dbReference type="GO" id="GO:1901653">
    <property type="term" value="P:cellular response to peptide"/>
    <property type="evidence" value="ECO:0007669"/>
    <property type="project" value="Ensembl"/>
</dbReference>
<dbReference type="GO" id="GO:0071466">
    <property type="term" value="P:cellular response to xenobiotic stimulus"/>
    <property type="evidence" value="ECO:0007669"/>
    <property type="project" value="Ensembl"/>
</dbReference>
<dbReference type="GO" id="GO:0021987">
    <property type="term" value="P:cerebral cortex development"/>
    <property type="evidence" value="ECO:0007669"/>
    <property type="project" value="Ensembl"/>
</dbReference>
<dbReference type="GO" id="GO:0016358">
    <property type="term" value="P:dendrite development"/>
    <property type="evidence" value="ECO:0000315"/>
    <property type="project" value="MGI"/>
</dbReference>
<dbReference type="GO" id="GO:0003006">
    <property type="term" value="P:developmental process involved in reproduction"/>
    <property type="evidence" value="ECO:0007669"/>
    <property type="project" value="Ensembl"/>
</dbReference>
<dbReference type="GO" id="GO:0046847">
    <property type="term" value="P:filopodium assembly"/>
    <property type="evidence" value="ECO:0000250"/>
    <property type="project" value="UniProtKB"/>
</dbReference>
<dbReference type="GO" id="GO:0021766">
    <property type="term" value="P:hippocampus development"/>
    <property type="evidence" value="ECO:0007669"/>
    <property type="project" value="Ensembl"/>
</dbReference>
<dbReference type="GO" id="GO:0007612">
    <property type="term" value="P:learning"/>
    <property type="evidence" value="ECO:0007669"/>
    <property type="project" value="Ensembl"/>
</dbReference>
<dbReference type="GO" id="GO:0060179">
    <property type="term" value="P:male mating behavior"/>
    <property type="evidence" value="ECO:0007669"/>
    <property type="project" value="Ensembl"/>
</dbReference>
<dbReference type="GO" id="GO:0030308">
    <property type="term" value="P:negative regulation of cell growth"/>
    <property type="evidence" value="ECO:0007669"/>
    <property type="project" value="Ensembl"/>
</dbReference>
<dbReference type="GO" id="GO:1904372">
    <property type="term" value="P:positive regulation of protein localization to actin cortical patch"/>
    <property type="evidence" value="ECO:0007669"/>
    <property type="project" value="Ensembl"/>
</dbReference>
<dbReference type="GO" id="GO:1903078">
    <property type="term" value="P:positive regulation of protein localization to plasma membrane"/>
    <property type="evidence" value="ECO:0007669"/>
    <property type="project" value="Ensembl"/>
</dbReference>
<dbReference type="GO" id="GO:1903119">
    <property type="term" value="P:protein localization to actin cytoskeleton"/>
    <property type="evidence" value="ECO:0007669"/>
    <property type="project" value="Ensembl"/>
</dbReference>
<dbReference type="GO" id="GO:1990778">
    <property type="term" value="P:protein localization to cell periphery"/>
    <property type="evidence" value="ECO:0007669"/>
    <property type="project" value="Ensembl"/>
</dbReference>
<dbReference type="GO" id="GO:2000474">
    <property type="term" value="P:regulation of opioid receptor signaling pathway"/>
    <property type="evidence" value="ECO:0000315"/>
    <property type="project" value="UniProtKB"/>
</dbReference>
<dbReference type="GO" id="GO:0150052">
    <property type="term" value="P:regulation of postsynapse assembly"/>
    <property type="evidence" value="ECO:0000314"/>
    <property type="project" value="SynGO"/>
</dbReference>
<dbReference type="GO" id="GO:0061458">
    <property type="term" value="P:reproductive system development"/>
    <property type="evidence" value="ECO:0007669"/>
    <property type="project" value="Ensembl"/>
</dbReference>
<dbReference type="GO" id="GO:0001975">
    <property type="term" value="P:response to amphetamine"/>
    <property type="evidence" value="ECO:0007669"/>
    <property type="project" value="Ensembl"/>
</dbReference>
<dbReference type="GO" id="GO:0035902">
    <property type="term" value="P:response to immobilization stress"/>
    <property type="evidence" value="ECO:0007669"/>
    <property type="project" value="Ensembl"/>
</dbReference>
<dbReference type="GO" id="GO:1904373">
    <property type="term" value="P:response to kainic acid"/>
    <property type="evidence" value="ECO:0007669"/>
    <property type="project" value="Ensembl"/>
</dbReference>
<dbReference type="GO" id="GO:1904386">
    <property type="term" value="P:response to L-phenylalanine derivative"/>
    <property type="evidence" value="ECO:0007669"/>
    <property type="project" value="Ensembl"/>
</dbReference>
<dbReference type="GO" id="GO:0035094">
    <property type="term" value="P:response to nicotine"/>
    <property type="evidence" value="ECO:0007669"/>
    <property type="project" value="Ensembl"/>
</dbReference>
<dbReference type="GO" id="GO:0034695">
    <property type="term" value="P:response to prostaglandin E"/>
    <property type="evidence" value="ECO:0007669"/>
    <property type="project" value="Ensembl"/>
</dbReference>
<dbReference type="GO" id="GO:0048545">
    <property type="term" value="P:response to steroid hormone"/>
    <property type="evidence" value="ECO:0007669"/>
    <property type="project" value="Ensembl"/>
</dbReference>
<dbReference type="CDD" id="cd06790">
    <property type="entry name" value="PDZ_neurabin-like"/>
    <property type="match status" value="1"/>
</dbReference>
<dbReference type="FunFam" id="2.30.42.10:FF:000010">
    <property type="entry name" value="Neurabin-1 isoform 1"/>
    <property type="match status" value="1"/>
</dbReference>
<dbReference type="Gene3D" id="2.30.42.10">
    <property type="match status" value="1"/>
</dbReference>
<dbReference type="InterPro" id="IPR040645">
    <property type="entry name" value="Neurabin-1/2_PDZ"/>
</dbReference>
<dbReference type="InterPro" id="IPR043446">
    <property type="entry name" value="Neurabin-like"/>
</dbReference>
<dbReference type="InterPro" id="IPR001478">
    <property type="entry name" value="PDZ"/>
</dbReference>
<dbReference type="InterPro" id="IPR036034">
    <property type="entry name" value="PDZ_sf"/>
</dbReference>
<dbReference type="PANTHER" id="PTHR16154">
    <property type="entry name" value="NEURABIN"/>
    <property type="match status" value="1"/>
</dbReference>
<dbReference type="PANTHER" id="PTHR16154:SF24">
    <property type="entry name" value="NEURABIN-2"/>
    <property type="match status" value="1"/>
</dbReference>
<dbReference type="Pfam" id="PF00595">
    <property type="entry name" value="PDZ"/>
    <property type="match status" value="1"/>
</dbReference>
<dbReference type="Pfam" id="PF17817">
    <property type="entry name" value="PDZ_5"/>
    <property type="match status" value="1"/>
</dbReference>
<dbReference type="SMART" id="SM00228">
    <property type="entry name" value="PDZ"/>
    <property type="match status" value="1"/>
</dbReference>
<dbReference type="SUPFAM" id="SSF50156">
    <property type="entry name" value="PDZ domain-like"/>
    <property type="match status" value="1"/>
</dbReference>
<dbReference type="PROSITE" id="PS50106">
    <property type="entry name" value="PDZ"/>
    <property type="match status" value="1"/>
</dbReference>
<keyword id="KW-0009">Actin-binding</keyword>
<keyword id="KW-0025">Alternative splicing</keyword>
<keyword id="KW-0965">Cell junction</keyword>
<keyword id="KW-1003">Cell membrane</keyword>
<keyword id="KW-0966">Cell projection</keyword>
<keyword id="KW-0175">Coiled coil</keyword>
<keyword id="KW-0963">Cytoplasm</keyword>
<keyword id="KW-0206">Cytoskeleton</keyword>
<keyword id="KW-0217">Developmental protein</keyword>
<keyword id="KW-0221">Differentiation</keyword>
<keyword id="KW-0472">Membrane</keyword>
<keyword id="KW-0524">Neurogenesis</keyword>
<keyword id="KW-0539">Nucleus</keyword>
<keyword id="KW-0597">Phosphoprotein</keyword>
<keyword id="KW-1185">Reference proteome</keyword>
<keyword id="KW-0770">Synapse</keyword>
<comment type="function">
    <text evidence="1">Seems to act as a scaffold protein in multiple signaling pathways. Modulates excitatory synaptic transmission and dendritic spine morphology. Binds to actin filaments (F-actin) and shows cross-linking activity. Binds along the sides of the F-actin. May play an important role in linking the actin cytoskeleton to the plasma membrane at the synaptic junction. Believed to target protein phosphatase 1/PP1 to dendritic spines, which are rich in F-actin, and regulates its specificity toward ion channels and other substrates, such as AMPA-type and NMDA-type glutamate receptors. Plays a role in regulation of G-protein coupled receptor signaling, including dopamine D2 receptors and alpha-adrenergic receptors. May establish a signaling complex for dopaminergic neurotransmission through D2 receptors by linking receptors downstream signaling molecules and the actin cytoskeleton. Binds to ADRA1B and RGS2 and mediates regulation of ADRA1B signaling. May confer to Rac signaling specificity by binding to both, RacGEFs and Rac effector proteins. Probably regulates p70 S6 kinase activity by forming a complex with TIAM1. Required for hepatocyte growth factor (HGF)-induced cell migration (By similarity).</text>
</comment>
<comment type="subunit">
    <text evidence="2 3 9">Possibly exists as a homodimer, homotrimer or a homotetramer. Interacts with F-actin, PPP1CA, neurabin-1, TGN38 and D(2) dopamine receptor. Interacts with RGS1, RGS2, RGS4, RGS19 and ADRA1B, ADRA2A, ADRA2B, ADRA2C, CDKN2A, PPP1R2, RASGFR1 and TIAM1. Interacts (via C-terminus) with SPATA13 (via C-terminal tail) (By similarity). Interacts with DCLK2. Interacts with ADRA2B (By similarity).</text>
</comment>
<comment type="subcellular location">
    <subcellularLocation>
        <location evidence="2">Cytoplasm</location>
        <location evidence="2">Cytoskeleton</location>
    </subcellularLocation>
    <subcellularLocation>
        <location evidence="1">Nucleus</location>
    </subcellularLocation>
    <subcellularLocation>
        <location evidence="2">Postsynaptic density</location>
    </subcellularLocation>
    <subcellularLocation>
        <location evidence="1">Cell junction</location>
        <location evidence="1">Adherens junction</location>
    </subcellularLocation>
    <subcellularLocation>
        <location evidence="2">Cell projection</location>
        <location evidence="2">Dendritic spine</location>
    </subcellularLocation>
    <subcellularLocation>
        <location evidence="1">Cytoplasm</location>
    </subcellularLocation>
    <subcellularLocation>
        <location evidence="1">Cell membrane</location>
    </subcellularLocation>
    <subcellularLocation>
        <location evidence="1">Cell projection</location>
        <location evidence="1">Lamellipodium</location>
    </subcellularLocation>
    <subcellularLocation>
        <location evidence="1">Cell projection</location>
        <location evidence="1">Filopodium</location>
    </subcellularLocation>
    <subcellularLocation>
        <location evidence="1">Cell projection</location>
        <location evidence="1">Ruffle membrane</location>
    </subcellularLocation>
    <text evidence="1 2">Enriched at synapse and cadherin-based cell-cell adhesion sites. In neurons, both cytosolic and membrane-associated, and highly enriched in the postsynaptic density apposed to exitatory synapses (By similarity). Colocalizes with PPP1R2 at actin-rich adherens junctions in epithelial cells and in dendritic spines. Accumulates in the lamellipodium, filopodium and ruffle membrane in response to hepatocyte growth factor (HGF) treatment (By similarity).</text>
</comment>
<comment type="alternative products">
    <event type="alternative splicing"/>
    <isoform>
        <id>Q6R891-1</id>
        <name>1</name>
        <sequence type="displayed"/>
    </isoform>
    <isoform>
        <id>Q6R891-2</id>
        <name>2</name>
        <sequence type="described" ref="VSP_017674 VSP_017675"/>
    </isoform>
</comment>
<comment type="domain">
    <text evidence="1">The PP1 binding region is natively unstructured, upon PP1 binding, it acquires structure, blocks a substrate-binding site, and restricts PP1 phosphatase specificity to a subset of substrates.</text>
</comment>
<comment type="PTM">
    <text evidence="1">Stimulation of D1 (but not D2) dopamine receptors induces Ser-94 phosphorylation. Dephosphorylation of Ser-94 is mediated mainly by PP1 and to a lesser extent by PP2A. Phosphorylation of spinophilin disrupts its association with F-actin, but does not affect its binding to PP1 (By similarity).</text>
</comment>